<dbReference type="EC" id="3.6.5.-" evidence="4"/>
<dbReference type="EMBL" id="D79214">
    <property type="protein sequence ID" value="BAA33530.1"/>
    <property type="molecule type" value="Genomic_DNA"/>
</dbReference>
<dbReference type="EMBL" id="CU329672">
    <property type="protein sequence ID" value="CAA21821.1"/>
    <property type="molecule type" value="Genomic_DNA"/>
</dbReference>
<dbReference type="EMBL" id="D89207">
    <property type="protein sequence ID" value="BAA13868.1"/>
    <property type="molecule type" value="mRNA"/>
</dbReference>
<dbReference type="PIR" id="T41442">
    <property type="entry name" value="T41442"/>
</dbReference>
<dbReference type="PIR" id="T43011">
    <property type="entry name" value="T43011"/>
</dbReference>
<dbReference type="PIR" id="T51948">
    <property type="entry name" value="T51948"/>
</dbReference>
<dbReference type="RefSeq" id="NP_588225.1">
    <property type="nucleotide sequence ID" value="NM_001023215.2"/>
</dbReference>
<dbReference type="PDB" id="1R5B">
    <property type="method" value="X-ray"/>
    <property type="resolution" value="2.35 A"/>
    <property type="chains" value="A=196-662"/>
</dbReference>
<dbReference type="PDB" id="1R5N">
    <property type="method" value="X-ray"/>
    <property type="resolution" value="2.90 A"/>
    <property type="chains" value="A=196-662"/>
</dbReference>
<dbReference type="PDB" id="1R5O">
    <property type="method" value="X-ray"/>
    <property type="resolution" value="3.20 A"/>
    <property type="chains" value="A=196-662"/>
</dbReference>
<dbReference type="PDB" id="3E20">
    <property type="method" value="X-ray"/>
    <property type="resolution" value="3.50 A"/>
    <property type="chains" value="A/D/E/J=467-662"/>
</dbReference>
<dbReference type="PDBsum" id="1R5B"/>
<dbReference type="PDBsum" id="1R5N"/>
<dbReference type="PDBsum" id="1R5O"/>
<dbReference type="PDBsum" id="3E20"/>
<dbReference type="SMR" id="O74718"/>
<dbReference type="BioGRID" id="276042">
    <property type="interactions" value="10"/>
</dbReference>
<dbReference type="ComplexPortal" id="CPX-2722">
    <property type="entry name" value="ERF1-ERF3 translation termination complex"/>
</dbReference>
<dbReference type="DIP" id="DIP-59469N"/>
<dbReference type="FunCoup" id="O74718">
    <property type="interactions" value="477"/>
</dbReference>
<dbReference type="IntAct" id="O74718">
    <property type="interactions" value="1"/>
</dbReference>
<dbReference type="STRING" id="284812.O74718"/>
<dbReference type="iPTMnet" id="O74718"/>
<dbReference type="PaxDb" id="4896-SPCC584.04.1"/>
<dbReference type="EnsemblFungi" id="SPCC584.04.1">
    <property type="protein sequence ID" value="SPCC584.04.1:pep"/>
    <property type="gene ID" value="SPCC584.04"/>
</dbReference>
<dbReference type="GeneID" id="2539479"/>
<dbReference type="KEGG" id="spo:2539479"/>
<dbReference type="PomBase" id="SPCC584.04">
    <property type="gene designation" value="sup35"/>
</dbReference>
<dbReference type="VEuPathDB" id="FungiDB:SPCC584.04"/>
<dbReference type="eggNOG" id="KOG0459">
    <property type="taxonomic scope" value="Eukaryota"/>
</dbReference>
<dbReference type="HOGENOM" id="CLU_007265_3_8_1"/>
<dbReference type="InParanoid" id="O74718"/>
<dbReference type="OMA" id="IERYEEC"/>
<dbReference type="PhylomeDB" id="O74718"/>
<dbReference type="Reactome" id="R-SPO-72764">
    <property type="pathway name" value="Eukaryotic Translation Termination"/>
</dbReference>
<dbReference type="Reactome" id="R-SPO-975956">
    <property type="pathway name" value="Nonsense Mediated Decay (NMD) independent of the Exon Junction Complex (EJC)"/>
</dbReference>
<dbReference type="Reactome" id="R-SPO-975957">
    <property type="pathway name" value="Nonsense Mediated Decay (NMD) enhanced by the Exon Junction Complex (EJC)"/>
</dbReference>
<dbReference type="CD-CODE" id="7D39771A">
    <property type="entry name" value="Synthetic Condensate 000042"/>
</dbReference>
<dbReference type="CD-CODE" id="89D152D3">
    <property type="entry name" value="Sup35 condensate"/>
</dbReference>
<dbReference type="EvolutionaryTrace" id="O74718"/>
<dbReference type="PRO" id="PR:O74718"/>
<dbReference type="Proteomes" id="UP000002485">
    <property type="component" value="Chromosome III"/>
</dbReference>
<dbReference type="GO" id="GO:0005829">
    <property type="term" value="C:cytosol"/>
    <property type="evidence" value="ECO:0007005"/>
    <property type="project" value="PomBase"/>
</dbReference>
<dbReference type="GO" id="GO:0018444">
    <property type="term" value="C:translation release factor complex"/>
    <property type="evidence" value="ECO:0000314"/>
    <property type="project" value="PomBase"/>
</dbReference>
<dbReference type="GO" id="GO:0005525">
    <property type="term" value="F:GTP binding"/>
    <property type="evidence" value="ECO:0000314"/>
    <property type="project" value="PomBase"/>
</dbReference>
<dbReference type="GO" id="GO:0003924">
    <property type="term" value="F:GTPase activity"/>
    <property type="evidence" value="ECO:0000314"/>
    <property type="project" value="UniProtKB"/>
</dbReference>
<dbReference type="GO" id="GO:0000287">
    <property type="term" value="F:magnesium ion binding"/>
    <property type="evidence" value="ECO:0000305"/>
    <property type="project" value="DisProt"/>
</dbReference>
<dbReference type="GO" id="GO:0003747">
    <property type="term" value="F:translation release factor activity"/>
    <property type="evidence" value="ECO:0007669"/>
    <property type="project" value="InterPro"/>
</dbReference>
<dbReference type="GO" id="GO:0002184">
    <property type="term" value="P:cytoplasmic translational termination"/>
    <property type="evidence" value="ECO:0000316"/>
    <property type="project" value="PomBase"/>
</dbReference>
<dbReference type="GO" id="GO:0000288">
    <property type="term" value="P:nuclear-transcribed mRNA catabolic process, deadenylation-dependent decay"/>
    <property type="evidence" value="ECO:0007669"/>
    <property type="project" value="InterPro"/>
</dbReference>
<dbReference type="GO" id="GO:0006412">
    <property type="term" value="P:translation"/>
    <property type="evidence" value="ECO:0000318"/>
    <property type="project" value="GO_Central"/>
</dbReference>
<dbReference type="CDD" id="cd01883">
    <property type="entry name" value="EF1_alpha"/>
    <property type="match status" value="1"/>
</dbReference>
<dbReference type="CDD" id="cd03704">
    <property type="entry name" value="eRF3_C_III"/>
    <property type="match status" value="1"/>
</dbReference>
<dbReference type="CDD" id="cd03698">
    <property type="entry name" value="eRF3_II_like"/>
    <property type="match status" value="1"/>
</dbReference>
<dbReference type="DisProt" id="DP00396"/>
<dbReference type="FunFam" id="2.40.30.10:FF:000017">
    <property type="entry name" value="Eukaryotic peptide chain release factor GTP-binding subunit"/>
    <property type="match status" value="1"/>
</dbReference>
<dbReference type="FunFam" id="3.40.50.300:FF:000503">
    <property type="entry name" value="Peptide chain release factor subunit 3"/>
    <property type="match status" value="1"/>
</dbReference>
<dbReference type="FunFam" id="2.40.30.10:FF:000020">
    <property type="entry name" value="Translation elongation factor EF-1"/>
    <property type="match status" value="1"/>
</dbReference>
<dbReference type="Gene3D" id="3.40.50.300">
    <property type="entry name" value="P-loop containing nucleotide triphosphate hydrolases"/>
    <property type="match status" value="1"/>
</dbReference>
<dbReference type="Gene3D" id="2.40.30.10">
    <property type="entry name" value="Translation factors"/>
    <property type="match status" value="2"/>
</dbReference>
<dbReference type="InterPro" id="IPR031157">
    <property type="entry name" value="G_TR_CS"/>
</dbReference>
<dbReference type="InterPro" id="IPR054696">
    <property type="entry name" value="GTP-eEF1A_C"/>
</dbReference>
<dbReference type="InterPro" id="IPR027417">
    <property type="entry name" value="P-loop_NTPase"/>
</dbReference>
<dbReference type="InterPro" id="IPR003285">
    <property type="entry name" value="Sup35"/>
</dbReference>
<dbReference type="InterPro" id="IPR000795">
    <property type="entry name" value="T_Tr_GTP-bd_dom"/>
</dbReference>
<dbReference type="InterPro" id="IPR050100">
    <property type="entry name" value="TRAFAC_GTPase_members"/>
</dbReference>
<dbReference type="InterPro" id="IPR009000">
    <property type="entry name" value="Transl_B-barrel_sf"/>
</dbReference>
<dbReference type="InterPro" id="IPR009001">
    <property type="entry name" value="Transl_elong_EF1A/Init_IF2_C"/>
</dbReference>
<dbReference type="PANTHER" id="PTHR23115">
    <property type="entry name" value="TRANSLATION FACTOR"/>
    <property type="match status" value="1"/>
</dbReference>
<dbReference type="Pfam" id="PF22594">
    <property type="entry name" value="GTP-eEF1A_C"/>
    <property type="match status" value="1"/>
</dbReference>
<dbReference type="Pfam" id="PF00009">
    <property type="entry name" value="GTP_EFTU"/>
    <property type="match status" value="1"/>
</dbReference>
<dbReference type="PRINTS" id="PR00315">
    <property type="entry name" value="ELONGATNFCT"/>
</dbReference>
<dbReference type="PRINTS" id="PR01343">
    <property type="entry name" value="YEASTERF"/>
</dbReference>
<dbReference type="SUPFAM" id="SSF50465">
    <property type="entry name" value="EF-Tu/eEF-1alpha/eIF2-gamma C-terminal domain"/>
    <property type="match status" value="1"/>
</dbReference>
<dbReference type="SUPFAM" id="SSF52540">
    <property type="entry name" value="P-loop containing nucleoside triphosphate hydrolases"/>
    <property type="match status" value="1"/>
</dbReference>
<dbReference type="SUPFAM" id="SSF50447">
    <property type="entry name" value="Translation proteins"/>
    <property type="match status" value="1"/>
</dbReference>
<dbReference type="PROSITE" id="PS00301">
    <property type="entry name" value="G_TR_1"/>
    <property type="match status" value="1"/>
</dbReference>
<dbReference type="PROSITE" id="PS51722">
    <property type="entry name" value="G_TR_2"/>
    <property type="match status" value="1"/>
</dbReference>
<gene>
    <name type="primary">sup35</name>
    <name type="ORF">SPCC584.04</name>
</gene>
<accession>O74718</accession>
<accession>P78857</accession>
<organism>
    <name type="scientific">Schizosaccharomyces pombe (strain 972 / ATCC 24843)</name>
    <name type="common">Fission yeast</name>
    <dbReference type="NCBI Taxonomy" id="284812"/>
    <lineage>
        <taxon>Eukaryota</taxon>
        <taxon>Fungi</taxon>
        <taxon>Dikarya</taxon>
        <taxon>Ascomycota</taxon>
        <taxon>Taphrinomycotina</taxon>
        <taxon>Schizosaccharomycetes</taxon>
        <taxon>Schizosaccharomycetales</taxon>
        <taxon>Schizosaccharomycetaceae</taxon>
        <taxon>Schizosaccharomyces</taxon>
    </lineage>
</organism>
<comment type="function">
    <text evidence="4">GTPase component of the eRF1-eRF3-GTP ternary complex, a ternary complex that mediates translation termination in response to the termination codons (PubMed:19417105). Sup35/eRF3 mediates sup45/ERF1 delivery to stop codons: The eRF1-eRF3-GTP complex binds to a stop codon in the ribosomal A-site (PubMed:19417105). GTP hydrolysis by sup35/eRF3 induces a conformational change that leads to its dissociation, permitting sup45/eRF1 to accommodate fully in the A-site (PubMed:19417105).</text>
</comment>
<comment type="catalytic activity">
    <reaction evidence="4">
        <text>GTP + H2O = GDP + phosphate + H(+)</text>
        <dbReference type="Rhea" id="RHEA:19669"/>
        <dbReference type="ChEBI" id="CHEBI:15377"/>
        <dbReference type="ChEBI" id="CHEBI:15378"/>
        <dbReference type="ChEBI" id="CHEBI:37565"/>
        <dbReference type="ChEBI" id="CHEBI:43474"/>
        <dbReference type="ChEBI" id="CHEBI:58189"/>
    </reaction>
    <physiologicalReaction direction="left-to-right" evidence="4">
        <dbReference type="Rhea" id="RHEA:19670"/>
    </physiologicalReaction>
</comment>
<comment type="subunit">
    <text evidence="4">Component of the eRF1-eRF3-GTP ternary complex, composed of sup45/eRF1, sup35/eRF3 and GTP.</text>
</comment>
<comment type="subcellular location">
    <subcellularLocation>
        <location evidence="5">Cytoplasm</location>
    </subcellularLocation>
</comment>
<comment type="similarity">
    <text evidence="1">Belongs to the TRAFAC class translation factor GTPase superfamily. Classic translation factor GTPase family. ERF3 subfamily.</text>
</comment>
<proteinExistence type="evidence at protein level"/>
<feature type="chain" id="PRO_0000091488" description="Eukaryotic peptide chain release factor GTP-binding subunit">
    <location>
        <begin position="1"/>
        <end position="662"/>
    </location>
</feature>
<feature type="domain" description="tr-type G" evidence="1">
    <location>
        <begin position="236"/>
        <end position="464"/>
    </location>
</feature>
<feature type="region of interest" description="Disordered" evidence="2">
    <location>
        <begin position="1"/>
        <end position="220"/>
    </location>
</feature>
<feature type="region of interest" description="G1" evidence="1">
    <location>
        <begin position="245"/>
        <end position="252"/>
    </location>
</feature>
<feature type="region of interest" description="G2" evidence="1">
    <location>
        <begin position="301"/>
        <end position="305"/>
    </location>
</feature>
<feature type="region of interest" description="G3" evidence="1">
    <location>
        <begin position="322"/>
        <end position="325"/>
    </location>
</feature>
<feature type="region of interest" description="G4" evidence="1">
    <location>
        <begin position="384"/>
        <end position="387"/>
    </location>
</feature>
<feature type="region of interest" description="G5" evidence="1">
    <location>
        <begin position="427"/>
        <end position="429"/>
    </location>
</feature>
<feature type="compositionally biased region" description="Low complexity" evidence="2">
    <location>
        <begin position="26"/>
        <end position="40"/>
    </location>
</feature>
<feature type="compositionally biased region" description="Polar residues" evidence="2">
    <location>
        <begin position="62"/>
        <end position="89"/>
    </location>
</feature>
<feature type="compositionally biased region" description="Basic and acidic residues" evidence="2">
    <location>
        <begin position="91"/>
        <end position="102"/>
    </location>
</feature>
<feature type="compositionally biased region" description="Polar residues" evidence="2">
    <location>
        <begin position="122"/>
        <end position="134"/>
    </location>
</feature>
<feature type="compositionally biased region" description="Low complexity" evidence="2">
    <location>
        <begin position="141"/>
        <end position="158"/>
    </location>
</feature>
<feature type="compositionally biased region" description="Low complexity" evidence="2">
    <location>
        <begin position="192"/>
        <end position="213"/>
    </location>
</feature>
<feature type="binding site" evidence="6 7">
    <location>
        <begin position="245"/>
        <end position="252"/>
    </location>
    <ligand>
        <name>GTP</name>
        <dbReference type="ChEBI" id="CHEBI:37565"/>
    </ligand>
</feature>
<feature type="binding site" evidence="6 7">
    <location>
        <begin position="384"/>
        <end position="387"/>
    </location>
    <ligand>
        <name>GTP</name>
        <dbReference type="ChEBI" id="CHEBI:37565"/>
    </ligand>
</feature>
<feature type="binding site" evidence="6 7">
    <location>
        <begin position="428"/>
        <end position="429"/>
    </location>
    <ligand>
        <name>GTP</name>
        <dbReference type="ChEBI" id="CHEBI:37565"/>
    </ligand>
</feature>
<feature type="modified residue" description="Phosphothreonine" evidence="3">
    <location>
        <position position="182"/>
    </location>
</feature>
<feature type="modified residue" description="Phosphoserine" evidence="3">
    <location>
        <position position="539"/>
    </location>
</feature>
<feature type="mutagenesis site" description="Reduced interaction with sup45/eRF1." evidence="4">
    <original>S</original>
    <variation>A</variation>
    <location>
        <position position="571"/>
    </location>
</feature>
<feature type="mutagenesis site" description="Reduced interaction with sup45/eRF1." evidence="4">
    <original>I</original>
    <variation>A</variation>
    <location>
        <position position="572"/>
    </location>
</feature>
<feature type="mutagenesis site" description="Reduced interaction with sup45/eRF1." evidence="4">
    <original>Y</original>
    <variation>A</variation>
    <location>
        <position position="577"/>
    </location>
</feature>
<feature type="mutagenesis site" description="Reduced interaction with sup45/eRF1." evidence="4">
    <original>F</original>
    <variation>A</variation>
    <location>
        <position position="612"/>
    </location>
</feature>
<feature type="mutagenesis site" description="Reduced interaction with sup45/eRF1." evidence="4">
    <original>D</original>
    <variation>A</variation>
    <location>
        <position position="647"/>
    </location>
</feature>
<feature type="sequence conflict" description="In Ref. 1; BAA33530." evidence="5" ref="1">
    <original>QQ</original>
    <variation>LL</variation>
    <location>
        <begin position="79"/>
        <end position="80"/>
    </location>
</feature>
<feature type="sequence conflict" description="In Ref. 3; BAA13868." evidence="5" ref="3">
    <original>E</original>
    <variation>D</variation>
    <location>
        <position position="388"/>
    </location>
</feature>
<feature type="sequence conflict" description="In Ref. 3; BAA13868." evidence="5" ref="3">
    <original>RY</original>
    <variation>SN</variation>
    <location>
        <begin position="397"/>
        <end position="398"/>
    </location>
</feature>
<feature type="sequence conflict" description="In Ref. 1; BAA33530." evidence="5" ref="1">
    <original>E</original>
    <variation>G</variation>
    <location>
        <position position="589"/>
    </location>
</feature>
<feature type="turn" evidence="9">
    <location>
        <begin position="221"/>
        <end position="224"/>
    </location>
</feature>
<feature type="strand" evidence="10">
    <location>
        <begin position="226"/>
        <end position="228"/>
    </location>
</feature>
<feature type="helix" evidence="9">
    <location>
        <begin position="230"/>
        <end position="233"/>
    </location>
</feature>
<feature type="strand" evidence="9">
    <location>
        <begin position="237"/>
        <end position="245"/>
    </location>
</feature>
<feature type="helix" evidence="9">
    <location>
        <begin position="247"/>
        <end position="249"/>
    </location>
</feature>
<feature type="helix" evidence="9">
    <location>
        <begin position="251"/>
        <end position="261"/>
    </location>
</feature>
<feature type="helix" evidence="9">
    <location>
        <begin position="267"/>
        <end position="276"/>
    </location>
</feature>
<feature type="strand" evidence="9">
    <location>
        <begin position="310"/>
        <end position="312"/>
    </location>
</feature>
<feature type="strand" evidence="9">
    <location>
        <begin position="314"/>
        <end position="320"/>
    </location>
</feature>
<feature type="strand" evidence="9">
    <location>
        <begin position="341"/>
        <end position="348"/>
    </location>
</feature>
<feature type="helix" evidence="9">
    <location>
        <begin position="353"/>
        <end position="356"/>
    </location>
</feature>
<feature type="strand" evidence="10">
    <location>
        <begin position="359"/>
        <end position="361"/>
    </location>
</feature>
<feature type="helix" evidence="9">
    <location>
        <begin position="364"/>
        <end position="373"/>
    </location>
</feature>
<feature type="strand" evidence="9">
    <location>
        <begin position="377"/>
        <end position="384"/>
    </location>
</feature>
<feature type="strand" evidence="10">
    <location>
        <begin position="386"/>
        <end position="388"/>
    </location>
</feature>
<feature type="turn" evidence="11">
    <location>
        <begin position="389"/>
        <end position="393"/>
    </location>
</feature>
<feature type="helix" evidence="9">
    <location>
        <begin position="395"/>
        <end position="413"/>
    </location>
</feature>
<feature type="helix" evidence="9">
    <location>
        <begin position="417"/>
        <end position="420"/>
    </location>
</feature>
<feature type="strand" evidence="9">
    <location>
        <begin position="421"/>
        <end position="425"/>
    </location>
</feature>
<feature type="turn" evidence="9">
    <location>
        <begin position="428"/>
        <end position="431"/>
    </location>
</feature>
<feature type="strand" evidence="11">
    <location>
        <begin position="434"/>
        <end position="436"/>
    </location>
</feature>
<feature type="turn" evidence="9">
    <location>
        <begin position="440"/>
        <end position="442"/>
    </location>
</feature>
<feature type="helix" evidence="9">
    <location>
        <begin position="451"/>
        <end position="457"/>
    </location>
</feature>
<feature type="helix" evidence="9">
    <location>
        <begin position="462"/>
        <end position="465"/>
    </location>
</feature>
<feature type="strand" evidence="9">
    <location>
        <begin position="470"/>
        <end position="472"/>
    </location>
</feature>
<feature type="strand" evidence="9">
    <location>
        <begin position="475"/>
        <end position="487"/>
    </location>
</feature>
<feature type="strand" evidence="9">
    <location>
        <begin position="490"/>
        <end position="494"/>
    </location>
</feature>
<feature type="strand" evidence="9">
    <location>
        <begin position="497"/>
        <end position="502"/>
    </location>
</feature>
<feature type="turn" evidence="9">
    <location>
        <begin position="503"/>
        <end position="505"/>
    </location>
</feature>
<feature type="strand" evidence="9">
    <location>
        <begin position="506"/>
        <end position="514"/>
    </location>
</feature>
<feature type="strand" evidence="9">
    <location>
        <begin position="520"/>
        <end position="525"/>
    </location>
</feature>
<feature type="strand" evidence="9">
    <location>
        <begin position="529"/>
        <end position="536"/>
    </location>
</feature>
<feature type="strand" evidence="9">
    <location>
        <begin position="546"/>
        <end position="548"/>
    </location>
</feature>
<feature type="strand" evidence="9">
    <location>
        <begin position="550"/>
        <end position="552"/>
    </location>
</feature>
<feature type="strand" evidence="9">
    <location>
        <begin position="556"/>
        <end position="566"/>
    </location>
</feature>
<feature type="strand" evidence="9">
    <location>
        <begin position="573"/>
        <end position="575"/>
    </location>
</feature>
<feature type="strand" evidence="9">
    <location>
        <begin position="579"/>
        <end position="585"/>
    </location>
</feature>
<feature type="strand" evidence="9">
    <location>
        <begin position="590"/>
        <end position="594"/>
    </location>
</feature>
<feature type="strand" evidence="11">
    <location>
        <begin position="601"/>
        <end position="603"/>
    </location>
</feature>
<feature type="strand" evidence="9">
    <location>
        <begin position="621"/>
        <end position="630"/>
    </location>
</feature>
<feature type="turn" evidence="9">
    <location>
        <begin position="634"/>
        <end position="636"/>
    </location>
</feature>
<feature type="helix" evidence="9">
    <location>
        <begin position="638"/>
        <end position="641"/>
    </location>
</feature>
<feature type="strand" evidence="9">
    <location>
        <begin position="642"/>
        <end position="646"/>
    </location>
</feature>
<feature type="strand" evidence="9">
    <location>
        <begin position="648"/>
        <end position="650"/>
    </location>
</feature>
<feature type="strand" evidence="9">
    <location>
        <begin position="652"/>
        <end position="661"/>
    </location>
</feature>
<evidence type="ECO:0000255" key="1">
    <source>
        <dbReference type="PROSITE-ProRule" id="PRU01059"/>
    </source>
</evidence>
<evidence type="ECO:0000256" key="2">
    <source>
        <dbReference type="SAM" id="MobiDB-lite"/>
    </source>
</evidence>
<evidence type="ECO:0000269" key="3">
    <source>
    </source>
</evidence>
<evidence type="ECO:0000269" key="4">
    <source>
    </source>
</evidence>
<evidence type="ECO:0000305" key="5"/>
<evidence type="ECO:0000305" key="6">
    <source>
    </source>
</evidence>
<evidence type="ECO:0007744" key="7">
    <source>
        <dbReference type="PDB" id="1R5N"/>
    </source>
</evidence>
<evidence type="ECO:0007744" key="8">
    <source>
        <dbReference type="PDB" id="3E20"/>
    </source>
</evidence>
<evidence type="ECO:0007829" key="9">
    <source>
        <dbReference type="PDB" id="1R5B"/>
    </source>
</evidence>
<evidence type="ECO:0007829" key="10">
    <source>
        <dbReference type="PDB" id="1R5N"/>
    </source>
</evidence>
<evidence type="ECO:0007829" key="11">
    <source>
        <dbReference type="PDB" id="1R5O"/>
    </source>
</evidence>
<sequence>MASNQPNNGEQDEQLAKQTSKLSMSAKAPTFTPKAAPFIPSFQRPGFVPVNNIAGGYPYAQYTGQGQNSNSPHPTKSYQQYYQKPTGNTVDEDKSRVPDFSKKKSFVPPKPAIPKGKVLSLGGNTSAPKSTKPISISLGGTKAPTTTKPAAPAAQSKTETPAPKVTSESTKKETAAPPPQETPTKSADAELAKTPSAPAAALKKAAEAAEPATVTEDATDLQNEVDQELLKDMYGKEHVNIVFIGHVDAGKSTLGGNILFLTGMVDKRTMEKIEREAKEAGKESWYLSWALDSTSEEREKGKTVEVGRAYFETEHRRFSLLDAPGHKGYVTNMINGASQADIGVLVISARRGEFEAGFERGGQTREHAVLARTQGINHLVVVINKMDEPSVQWSEERYKECVDKLSMFLRRVAGYNSKTDVKYMPVSAYTGQNVKDRVDSSVCPWYQGPSLLEYLDSMTHLERKVNAPFIMPIASKYKDLGTILEGKIEAGSIKKNSNVLVMPINQTLEVTAIYDEADEEISSSICGDQVRLRVRGDDSDVQTGYVLTSTKNPVHATTRFIAQIAILELPSILTTGYSCVMHIHTAVEEVSFAKLLHKLDKTNRKSKKPPMFATKGMKIIAELETQTPVCMERFEDYQYMGRFTLRDQGTTVAVGKVVKILD</sequence>
<name>ERF3_SCHPO</name>
<protein>
    <recommendedName>
        <fullName>Eukaryotic peptide chain release factor GTP-binding subunit</fullName>
    </recommendedName>
    <alternativeName>
        <fullName>ERF-3</fullName>
        <shortName>ERF3</shortName>
        <ecNumber evidence="4">3.6.5.-</ecNumber>
    </alternativeName>
    <alternativeName>
        <fullName>ERF2</fullName>
    </alternativeName>
    <alternativeName>
        <fullName>Polypeptide release factor 3</fullName>
    </alternativeName>
    <alternativeName>
        <fullName>Translation release factor 3</fullName>
    </alternativeName>
</protein>
<reference key="1">
    <citation type="journal article" date="1998" name="RNA">
        <title>The stretch of C-terminal acidic amino acids of translational release factor eRF1 is a primary binding site for eRF3 of fission yeast.</title>
        <authorList>
            <person name="Ito K."/>
            <person name="Ebihara K."/>
            <person name="Nakamura Y."/>
        </authorList>
    </citation>
    <scope>NUCLEOTIDE SEQUENCE [GENOMIC DNA]</scope>
    <source>
        <strain>JY333</strain>
    </source>
</reference>
<reference key="2">
    <citation type="journal article" date="2002" name="Nature">
        <title>The genome sequence of Schizosaccharomyces pombe.</title>
        <authorList>
            <person name="Wood V."/>
            <person name="Gwilliam R."/>
            <person name="Rajandream M.A."/>
            <person name="Lyne M.H."/>
            <person name="Lyne R."/>
            <person name="Stewart A."/>
            <person name="Sgouros J.G."/>
            <person name="Peat N."/>
            <person name="Hayles J."/>
            <person name="Baker S.G."/>
            <person name="Basham D."/>
            <person name="Bowman S."/>
            <person name="Brooks K."/>
            <person name="Brown D."/>
            <person name="Brown S."/>
            <person name="Chillingworth T."/>
            <person name="Churcher C.M."/>
            <person name="Collins M."/>
            <person name="Connor R."/>
            <person name="Cronin A."/>
            <person name="Davis P."/>
            <person name="Feltwell T."/>
            <person name="Fraser A."/>
            <person name="Gentles S."/>
            <person name="Goble A."/>
            <person name="Hamlin N."/>
            <person name="Harris D.E."/>
            <person name="Hidalgo J."/>
            <person name="Hodgson G."/>
            <person name="Holroyd S."/>
            <person name="Hornsby T."/>
            <person name="Howarth S."/>
            <person name="Huckle E.J."/>
            <person name="Hunt S."/>
            <person name="Jagels K."/>
            <person name="James K.D."/>
            <person name="Jones L."/>
            <person name="Jones M."/>
            <person name="Leather S."/>
            <person name="McDonald S."/>
            <person name="McLean J."/>
            <person name="Mooney P."/>
            <person name="Moule S."/>
            <person name="Mungall K.L."/>
            <person name="Murphy L.D."/>
            <person name="Niblett D."/>
            <person name="Odell C."/>
            <person name="Oliver K."/>
            <person name="O'Neil S."/>
            <person name="Pearson D."/>
            <person name="Quail M.A."/>
            <person name="Rabbinowitsch E."/>
            <person name="Rutherford K.M."/>
            <person name="Rutter S."/>
            <person name="Saunders D."/>
            <person name="Seeger K."/>
            <person name="Sharp S."/>
            <person name="Skelton J."/>
            <person name="Simmonds M.N."/>
            <person name="Squares R."/>
            <person name="Squares S."/>
            <person name="Stevens K."/>
            <person name="Taylor K."/>
            <person name="Taylor R.G."/>
            <person name="Tivey A."/>
            <person name="Walsh S.V."/>
            <person name="Warren T."/>
            <person name="Whitehead S."/>
            <person name="Woodward J.R."/>
            <person name="Volckaert G."/>
            <person name="Aert R."/>
            <person name="Robben J."/>
            <person name="Grymonprez B."/>
            <person name="Weltjens I."/>
            <person name="Vanstreels E."/>
            <person name="Rieger M."/>
            <person name="Schaefer M."/>
            <person name="Mueller-Auer S."/>
            <person name="Gabel C."/>
            <person name="Fuchs M."/>
            <person name="Duesterhoeft A."/>
            <person name="Fritzc C."/>
            <person name="Holzer E."/>
            <person name="Moestl D."/>
            <person name="Hilbert H."/>
            <person name="Borzym K."/>
            <person name="Langer I."/>
            <person name="Beck A."/>
            <person name="Lehrach H."/>
            <person name="Reinhardt R."/>
            <person name="Pohl T.M."/>
            <person name="Eger P."/>
            <person name="Zimmermann W."/>
            <person name="Wedler H."/>
            <person name="Wambutt R."/>
            <person name="Purnelle B."/>
            <person name="Goffeau A."/>
            <person name="Cadieu E."/>
            <person name="Dreano S."/>
            <person name="Gloux S."/>
            <person name="Lelaure V."/>
            <person name="Mottier S."/>
            <person name="Galibert F."/>
            <person name="Aves S.J."/>
            <person name="Xiang Z."/>
            <person name="Hunt C."/>
            <person name="Moore K."/>
            <person name="Hurst S.M."/>
            <person name="Lucas M."/>
            <person name="Rochet M."/>
            <person name="Gaillardin C."/>
            <person name="Tallada V.A."/>
            <person name="Garzon A."/>
            <person name="Thode G."/>
            <person name="Daga R.R."/>
            <person name="Cruzado L."/>
            <person name="Jimenez J."/>
            <person name="Sanchez M."/>
            <person name="del Rey F."/>
            <person name="Benito J."/>
            <person name="Dominguez A."/>
            <person name="Revuelta J.L."/>
            <person name="Moreno S."/>
            <person name="Armstrong J."/>
            <person name="Forsburg S.L."/>
            <person name="Cerutti L."/>
            <person name="Lowe T."/>
            <person name="McCombie W.R."/>
            <person name="Paulsen I."/>
            <person name="Potashkin J."/>
            <person name="Shpakovski G.V."/>
            <person name="Ussery D."/>
            <person name="Barrell B.G."/>
            <person name="Nurse P."/>
        </authorList>
    </citation>
    <scope>NUCLEOTIDE SEQUENCE [LARGE SCALE GENOMIC DNA]</scope>
    <source>
        <strain>972 / ATCC 24843</strain>
    </source>
</reference>
<reference key="3">
    <citation type="journal article" date="1997" name="DNA Res.">
        <title>Identification of open reading frames in Schizosaccharomyces pombe cDNAs.</title>
        <authorList>
            <person name="Yoshioka S."/>
            <person name="Kato K."/>
            <person name="Nakai K."/>
            <person name="Okayama H."/>
            <person name="Nojima H."/>
        </authorList>
    </citation>
    <scope>NUCLEOTIDE SEQUENCE [LARGE SCALE MRNA] OF 383-662</scope>
    <source>
        <strain>PR745</strain>
    </source>
</reference>
<reference key="4">
    <citation type="journal article" date="2008" name="J. Proteome Res.">
        <title>Phosphoproteome analysis of fission yeast.</title>
        <authorList>
            <person name="Wilson-Grady J.T."/>
            <person name="Villen J."/>
            <person name="Gygi S.P."/>
        </authorList>
    </citation>
    <scope>PHOSPHORYLATION [LARGE SCALE ANALYSIS] AT THR-182 AND SER-539</scope>
    <scope>IDENTIFICATION BY MASS SPECTROMETRY</scope>
</reference>
<reference evidence="8" key="5">
    <citation type="journal article" date="2009" name="Genes Dev.">
        <title>Structural insights into eRF3 and stop codon recognition by eRF1.</title>
        <authorList>
            <person name="Cheng Z."/>
            <person name="Saito K."/>
            <person name="Pisarev A.V."/>
            <person name="Wada M."/>
            <person name="Pisareva V.P."/>
            <person name="Pestova T.V."/>
            <person name="Gajda M."/>
            <person name="Round A."/>
            <person name="Kong C."/>
            <person name="Lim M."/>
            <person name="Nakamura Y."/>
            <person name="Svergun D.I."/>
            <person name="Ito K."/>
            <person name="Song H."/>
        </authorList>
    </citation>
    <scope>X-RAY CRYSTALLOGRAPHY (3.50 ANGSTROMS) OF 467-662 IN COMPLEX WITH GDP AND SUP45</scope>
    <scope>FUNCTION</scope>
    <scope>CATALYTIC ACTIVITY</scope>
    <scope>IDENTIFICATION IN THE ERF1-ERF3-GTP TERNARY COMPLEX</scope>
    <scope>MUTAGENESIS OF SER-571; ILE-572; TYR-577; PHE-612 AND ASP-647</scope>
</reference>
<keyword id="KW-0002">3D-structure</keyword>
<keyword id="KW-0963">Cytoplasm</keyword>
<keyword id="KW-0342">GTP-binding</keyword>
<keyword id="KW-0378">Hydrolase</keyword>
<keyword id="KW-0547">Nucleotide-binding</keyword>
<keyword id="KW-0597">Phosphoprotein</keyword>
<keyword id="KW-0648">Protein biosynthesis</keyword>
<keyword id="KW-1185">Reference proteome</keyword>
<keyword id="KW-0677">Repeat</keyword>